<sequence length="103" mass="10996">MALSSIFGGGSPSQQSNLPTSSASSSVKDQLKGQIAQELAVANATELVNKVTENCFEKCLMAPYTSKQDTCVDQCLAKYMRSWNAISQAYVARIQQASANGDI</sequence>
<evidence type="ECO:0000250" key="1"/>
<evidence type="ECO:0000256" key="2">
    <source>
        <dbReference type="SAM" id="MobiDB-lite"/>
    </source>
</evidence>
<evidence type="ECO:0000305" key="3"/>
<gene>
    <name type="primary">TIM13</name>
    <name type="ordered locus">AAL144C</name>
</gene>
<feature type="chain" id="PRO_0000228069" description="Mitochondrial import inner membrane translocase subunit TIM13">
    <location>
        <begin position="1"/>
        <end position="103"/>
    </location>
</feature>
<feature type="region of interest" description="Disordered" evidence="2">
    <location>
        <begin position="1"/>
        <end position="25"/>
    </location>
</feature>
<feature type="short sequence motif" description="Twin CX3C motif">
    <location>
        <begin position="55"/>
        <end position="75"/>
    </location>
</feature>
<feature type="compositionally biased region" description="Polar residues" evidence="2">
    <location>
        <begin position="12"/>
        <end position="25"/>
    </location>
</feature>
<feature type="disulfide bond" evidence="1">
    <location>
        <begin position="55"/>
        <end position="75"/>
    </location>
</feature>
<feature type="disulfide bond" evidence="1">
    <location>
        <begin position="59"/>
        <end position="71"/>
    </location>
</feature>
<proteinExistence type="inferred from homology"/>
<keyword id="KW-0143">Chaperone</keyword>
<keyword id="KW-1015">Disulfide bond</keyword>
<keyword id="KW-0472">Membrane</keyword>
<keyword id="KW-0479">Metal-binding</keyword>
<keyword id="KW-0496">Mitochondrion</keyword>
<keyword id="KW-0999">Mitochondrion inner membrane</keyword>
<keyword id="KW-0653">Protein transport</keyword>
<keyword id="KW-1185">Reference proteome</keyword>
<keyword id="KW-0811">Translocation</keyword>
<keyword id="KW-0813">Transport</keyword>
<keyword id="KW-0862">Zinc</keyword>
<organism>
    <name type="scientific">Eremothecium gossypii (strain ATCC 10895 / CBS 109.51 / FGSC 9923 / NRRL Y-1056)</name>
    <name type="common">Yeast</name>
    <name type="synonym">Ashbya gossypii</name>
    <dbReference type="NCBI Taxonomy" id="284811"/>
    <lineage>
        <taxon>Eukaryota</taxon>
        <taxon>Fungi</taxon>
        <taxon>Dikarya</taxon>
        <taxon>Ascomycota</taxon>
        <taxon>Saccharomycotina</taxon>
        <taxon>Saccharomycetes</taxon>
        <taxon>Saccharomycetales</taxon>
        <taxon>Saccharomycetaceae</taxon>
        <taxon>Eremothecium</taxon>
    </lineage>
</organism>
<name>TIM13_EREGS</name>
<accession>Q75F72</accession>
<dbReference type="EMBL" id="AE016814">
    <property type="protein sequence ID" value="AAS50222.1"/>
    <property type="molecule type" value="Genomic_DNA"/>
</dbReference>
<dbReference type="RefSeq" id="NP_982398.1">
    <property type="nucleotide sequence ID" value="NM_207751.1"/>
</dbReference>
<dbReference type="SMR" id="Q75F72"/>
<dbReference type="FunCoup" id="Q75F72">
    <property type="interactions" value="469"/>
</dbReference>
<dbReference type="STRING" id="284811.Q75F72"/>
<dbReference type="EnsemblFungi" id="AAS50222">
    <property type="protein sequence ID" value="AAS50222"/>
    <property type="gene ID" value="AGOS_AAL144C"/>
</dbReference>
<dbReference type="GeneID" id="4618482"/>
<dbReference type="KEGG" id="ago:AGOS_AAL144C"/>
<dbReference type="eggNOG" id="KOG1733">
    <property type="taxonomic scope" value="Eukaryota"/>
</dbReference>
<dbReference type="HOGENOM" id="CLU_141397_0_1_1"/>
<dbReference type="InParanoid" id="Q75F72"/>
<dbReference type="OMA" id="MAAWNQV"/>
<dbReference type="OrthoDB" id="7813104at2759"/>
<dbReference type="Proteomes" id="UP000000591">
    <property type="component" value="Chromosome I"/>
</dbReference>
<dbReference type="GO" id="GO:0005743">
    <property type="term" value="C:mitochondrial inner membrane"/>
    <property type="evidence" value="ECO:0007669"/>
    <property type="project" value="UniProtKB-SubCell"/>
</dbReference>
<dbReference type="GO" id="GO:0042719">
    <property type="term" value="C:mitochondrial intermembrane space protein transporter complex"/>
    <property type="evidence" value="ECO:0000318"/>
    <property type="project" value="GO_Central"/>
</dbReference>
<dbReference type="GO" id="GO:0046872">
    <property type="term" value="F:metal ion binding"/>
    <property type="evidence" value="ECO:0007669"/>
    <property type="project" value="UniProtKB-KW"/>
</dbReference>
<dbReference type="GO" id="GO:0140318">
    <property type="term" value="F:protein transporter activity"/>
    <property type="evidence" value="ECO:0007669"/>
    <property type="project" value="EnsemblFungi"/>
</dbReference>
<dbReference type="GO" id="GO:0045039">
    <property type="term" value="P:protein insertion into mitochondrial inner membrane"/>
    <property type="evidence" value="ECO:0000318"/>
    <property type="project" value="GO_Central"/>
</dbReference>
<dbReference type="FunFam" id="1.10.287.810:FF:000001">
    <property type="entry name" value="mitochondrial import inner membrane translocase subunit TIM13"/>
    <property type="match status" value="1"/>
</dbReference>
<dbReference type="Gene3D" id="1.10.287.810">
    <property type="entry name" value="Mitochondrial import inner membrane translocase subunit tim13 like domains"/>
    <property type="match status" value="1"/>
</dbReference>
<dbReference type="InterPro" id="IPR004217">
    <property type="entry name" value="Tim10-like"/>
</dbReference>
<dbReference type="InterPro" id="IPR035427">
    <property type="entry name" value="Tim10-like_dom_sf"/>
</dbReference>
<dbReference type="Pfam" id="PF02953">
    <property type="entry name" value="zf-Tim10_DDP"/>
    <property type="match status" value="1"/>
</dbReference>
<dbReference type="SUPFAM" id="SSF144122">
    <property type="entry name" value="Tim10-like"/>
    <property type="match status" value="1"/>
</dbReference>
<protein>
    <recommendedName>
        <fullName>Mitochondrial import inner membrane translocase subunit TIM13</fullName>
    </recommendedName>
</protein>
<comment type="function">
    <text evidence="1">Mitochondrial intermembrane chaperone that participates in the import and insertion of some multi-pass transmembrane proteins into the mitochondrial inner membrane. Also required for the transfer of beta-barrel precursors from the TOM complex to the sorting and assembly machinery (SAM complex) of the outer membrane. Acts as a chaperone-like protein that protects the hydrophobic precursors from aggregation and guide them through the mitochondrial intermembrane space. The TIM8-TIM13 complex is non essential and only mediates the import of few proteins, while the predominant TIM9-TIM10 70 kDa complex is crucial and mediates the import of much more proteins (By similarity).</text>
</comment>
<comment type="subunit">
    <text evidence="1">Heterohexamer; composed of 3 copies of TIM8 and 3 copies of TIM13, named soluble 70 kDa complex. Associates with the TIM22 complex, whose core is composed of TIM22 and TIM54. Interacts with the transmembrane regions of multi-pass transmembrane proteins in transit (By similarity).</text>
</comment>
<comment type="subcellular location">
    <subcellularLocation>
        <location evidence="1">Mitochondrion inner membrane</location>
        <topology evidence="1">Peripheral membrane protein</topology>
        <orientation evidence="1">Intermembrane side</orientation>
    </subcellularLocation>
</comment>
<comment type="domain">
    <text evidence="1">The twin CX3C motif contains 4 conserved Cys residues that form 2 disulfide bonds in the mitochondrial intermembrane space. However, during the transit of TIM13 from cytoplasm into mitochondrion, the Cys residues probably coordinate zinc, thereby preventing folding and allowing its transfer across mitochondrial outer membrane (By similarity).</text>
</comment>
<comment type="similarity">
    <text evidence="3">Belongs to the small Tim family.</text>
</comment>
<reference key="1">
    <citation type="journal article" date="2004" name="Science">
        <title>The Ashbya gossypii genome as a tool for mapping the ancient Saccharomyces cerevisiae genome.</title>
        <authorList>
            <person name="Dietrich F.S."/>
            <person name="Voegeli S."/>
            <person name="Brachat S."/>
            <person name="Lerch A."/>
            <person name="Gates K."/>
            <person name="Steiner S."/>
            <person name="Mohr C."/>
            <person name="Poehlmann R."/>
            <person name="Luedi P."/>
            <person name="Choi S."/>
            <person name="Wing R.A."/>
            <person name="Flavier A."/>
            <person name="Gaffney T.D."/>
            <person name="Philippsen P."/>
        </authorList>
    </citation>
    <scope>NUCLEOTIDE SEQUENCE [LARGE SCALE GENOMIC DNA]</scope>
    <source>
        <strain>ATCC 10895 / CBS 109.51 / FGSC 9923 / NRRL Y-1056</strain>
    </source>
</reference>
<reference key="2">
    <citation type="journal article" date="2013" name="G3 (Bethesda)">
        <title>Genomes of Ashbya fungi isolated from insects reveal four mating-type loci, numerous translocations, lack of transposons, and distinct gene duplications.</title>
        <authorList>
            <person name="Dietrich F.S."/>
            <person name="Voegeli S."/>
            <person name="Kuo S."/>
            <person name="Philippsen P."/>
        </authorList>
    </citation>
    <scope>GENOME REANNOTATION</scope>
    <source>
        <strain>ATCC 10895 / CBS 109.51 / FGSC 9923 / NRRL Y-1056</strain>
    </source>
</reference>